<keyword id="KW-0342">GTP-binding</keyword>
<keyword id="KW-0378">Hydrolase</keyword>
<keyword id="KW-0547">Nucleotide-binding</keyword>
<keyword id="KW-0539">Nucleus</keyword>
<keyword id="KW-1185">Reference proteome</keyword>
<dbReference type="EMBL" id="DP000009">
    <property type="protein sequence ID" value="ABF95948.1"/>
    <property type="molecule type" value="Genomic_DNA"/>
</dbReference>
<dbReference type="EMBL" id="DP000009">
    <property type="protein sequence ID" value="ABF95949.1"/>
    <property type="molecule type" value="Genomic_DNA"/>
</dbReference>
<dbReference type="EMBL" id="AP008209">
    <property type="protein sequence ID" value="BAF12037.1"/>
    <property type="molecule type" value="Genomic_DNA"/>
</dbReference>
<dbReference type="EMBL" id="AP014959">
    <property type="protein sequence ID" value="BAS84207.1"/>
    <property type="molecule type" value="Genomic_DNA"/>
</dbReference>
<dbReference type="EMBL" id="CM000140">
    <property type="protein sequence ID" value="EAZ26923.1"/>
    <property type="molecule type" value="Genomic_DNA"/>
</dbReference>
<dbReference type="EMBL" id="AK103394">
    <property type="protein sequence ID" value="BAG96058.1"/>
    <property type="molecule type" value="mRNA"/>
</dbReference>
<dbReference type="EMBL" id="AK105418">
    <property type="protein sequence ID" value="BAG97236.1"/>
    <property type="molecule type" value="mRNA"/>
</dbReference>
<dbReference type="EMBL" id="AK119231">
    <property type="protein sequence ID" value="BAG99592.1"/>
    <property type="molecule type" value="mRNA"/>
</dbReference>
<dbReference type="RefSeq" id="XP_015632277.1">
    <property type="nucleotide sequence ID" value="XM_015776791.1"/>
</dbReference>
<dbReference type="SMR" id="Q10LF7"/>
<dbReference type="FunCoup" id="Q10LF7">
    <property type="interactions" value="1585"/>
</dbReference>
<dbReference type="STRING" id="39947.Q10LF7"/>
<dbReference type="PaxDb" id="39947-Q10LF7"/>
<dbReference type="EnsemblPlants" id="Os03t0352400-01">
    <property type="protein sequence ID" value="Os03t0352400-01"/>
    <property type="gene ID" value="Os03g0352400"/>
</dbReference>
<dbReference type="Gramene" id="Os03t0352400-01">
    <property type="protein sequence ID" value="Os03t0352400-01"/>
    <property type="gene ID" value="Os03g0352400"/>
</dbReference>
<dbReference type="KEGG" id="dosa:Os03g0352400"/>
<dbReference type="eggNOG" id="KOG2423">
    <property type="taxonomic scope" value="Eukaryota"/>
</dbReference>
<dbReference type="HOGENOM" id="CLU_011106_4_2_1"/>
<dbReference type="InParanoid" id="Q10LF7"/>
<dbReference type="OMA" id="RTQGFNH"/>
<dbReference type="OrthoDB" id="444945at2759"/>
<dbReference type="Proteomes" id="UP000000763">
    <property type="component" value="Chromosome 3"/>
</dbReference>
<dbReference type="Proteomes" id="UP000007752">
    <property type="component" value="Chromosome 3"/>
</dbReference>
<dbReference type="Proteomes" id="UP000059680">
    <property type="component" value="Chromosome 3"/>
</dbReference>
<dbReference type="GO" id="GO:0005730">
    <property type="term" value="C:nucleolus"/>
    <property type="evidence" value="ECO:0000318"/>
    <property type="project" value="GO_Central"/>
</dbReference>
<dbReference type="GO" id="GO:0005525">
    <property type="term" value="F:GTP binding"/>
    <property type="evidence" value="ECO:0007669"/>
    <property type="project" value="UniProtKB-KW"/>
</dbReference>
<dbReference type="GO" id="GO:0016787">
    <property type="term" value="F:hydrolase activity"/>
    <property type="evidence" value="ECO:0007669"/>
    <property type="project" value="UniProtKB-KW"/>
</dbReference>
<dbReference type="CDD" id="cd01858">
    <property type="entry name" value="NGP_1"/>
    <property type="match status" value="1"/>
</dbReference>
<dbReference type="FunFam" id="3.40.50.300:FF:000559">
    <property type="entry name" value="Nuclear/nucleolar GTPase 2"/>
    <property type="match status" value="1"/>
</dbReference>
<dbReference type="FunFam" id="1.10.1580.10:FF:000001">
    <property type="entry name" value="Nucleolar GTP-binding protein 2"/>
    <property type="match status" value="1"/>
</dbReference>
<dbReference type="Gene3D" id="1.10.1580.10">
    <property type="match status" value="1"/>
</dbReference>
<dbReference type="Gene3D" id="3.40.50.300">
    <property type="entry name" value="P-loop containing nucleotide triphosphate hydrolases"/>
    <property type="match status" value="1"/>
</dbReference>
<dbReference type="InterPro" id="IPR030378">
    <property type="entry name" value="G_CP_dom"/>
</dbReference>
<dbReference type="InterPro" id="IPR024929">
    <property type="entry name" value="GNL2_CP_dom"/>
</dbReference>
<dbReference type="InterPro" id="IPR006073">
    <property type="entry name" value="GTP-bd"/>
</dbReference>
<dbReference type="InterPro" id="IPR023179">
    <property type="entry name" value="GTP-bd_ortho_bundle_sf"/>
</dbReference>
<dbReference type="InterPro" id="IPR012971">
    <property type="entry name" value="NOG2_N_dom"/>
</dbReference>
<dbReference type="InterPro" id="IPR027417">
    <property type="entry name" value="P-loop_NTPase"/>
</dbReference>
<dbReference type="InterPro" id="IPR050755">
    <property type="entry name" value="TRAFAC_YlqF/YawG_RiboMat"/>
</dbReference>
<dbReference type="PANTHER" id="PTHR11089">
    <property type="entry name" value="GTP-BINDING PROTEIN-RELATED"/>
    <property type="match status" value="1"/>
</dbReference>
<dbReference type="PANTHER" id="PTHR11089:SF9">
    <property type="entry name" value="NUCLEOLAR GTP-BINDING PROTEIN 2"/>
    <property type="match status" value="1"/>
</dbReference>
<dbReference type="Pfam" id="PF01926">
    <property type="entry name" value="MMR_HSR1"/>
    <property type="match status" value="1"/>
</dbReference>
<dbReference type="Pfam" id="PF08153">
    <property type="entry name" value="NGP1NT"/>
    <property type="match status" value="1"/>
</dbReference>
<dbReference type="PRINTS" id="PR00326">
    <property type="entry name" value="GTP1OBG"/>
</dbReference>
<dbReference type="SUPFAM" id="SSF52540">
    <property type="entry name" value="P-loop containing nucleoside triphosphate hydrolases"/>
    <property type="match status" value="1"/>
</dbReference>
<dbReference type="PROSITE" id="PS51721">
    <property type="entry name" value="G_CP"/>
    <property type="match status" value="1"/>
</dbReference>
<reference key="1">
    <citation type="journal article" date="2005" name="Genome Res.">
        <title>Sequence, annotation, and analysis of synteny between rice chromosome 3 and diverged grass species.</title>
        <authorList>
            <consortium name="The rice chromosome 3 sequencing consortium"/>
            <person name="Buell C.R."/>
            <person name="Yuan Q."/>
            <person name="Ouyang S."/>
            <person name="Liu J."/>
            <person name="Zhu W."/>
            <person name="Wang A."/>
            <person name="Maiti R."/>
            <person name="Haas B."/>
            <person name="Wortman J."/>
            <person name="Pertea M."/>
            <person name="Jones K.M."/>
            <person name="Kim M."/>
            <person name="Overton L."/>
            <person name="Tsitrin T."/>
            <person name="Fadrosh D."/>
            <person name="Bera J."/>
            <person name="Weaver B."/>
            <person name="Jin S."/>
            <person name="Johri S."/>
            <person name="Reardon M."/>
            <person name="Webb K."/>
            <person name="Hill J."/>
            <person name="Moffat K."/>
            <person name="Tallon L."/>
            <person name="Van Aken S."/>
            <person name="Lewis M."/>
            <person name="Utterback T."/>
            <person name="Feldblyum T."/>
            <person name="Zismann V."/>
            <person name="Iobst S."/>
            <person name="Hsiao J."/>
            <person name="de Vazeille A.R."/>
            <person name="Salzberg S.L."/>
            <person name="White O."/>
            <person name="Fraser C.M."/>
            <person name="Yu Y."/>
            <person name="Kim H."/>
            <person name="Rambo T."/>
            <person name="Currie J."/>
            <person name="Collura K."/>
            <person name="Kernodle-Thompson S."/>
            <person name="Wei F."/>
            <person name="Kudrna K."/>
            <person name="Ammiraju J.S.S."/>
            <person name="Luo M."/>
            <person name="Goicoechea J.L."/>
            <person name="Wing R.A."/>
            <person name="Henry D."/>
            <person name="Oates R."/>
            <person name="Palmer M."/>
            <person name="Pries G."/>
            <person name="Saski C."/>
            <person name="Simmons J."/>
            <person name="Soderlund C."/>
            <person name="Nelson W."/>
            <person name="de la Bastide M."/>
            <person name="Spiegel L."/>
            <person name="Nascimento L."/>
            <person name="Huang E."/>
            <person name="Preston R."/>
            <person name="Zutavern T."/>
            <person name="Palmer L."/>
            <person name="O'Shaughnessy A."/>
            <person name="Dike S."/>
            <person name="McCombie W.R."/>
            <person name="Minx P."/>
            <person name="Cordum H."/>
            <person name="Wilson R."/>
            <person name="Jin W."/>
            <person name="Lee H.R."/>
            <person name="Jiang J."/>
            <person name="Jackson S."/>
        </authorList>
    </citation>
    <scope>NUCLEOTIDE SEQUENCE [LARGE SCALE GENOMIC DNA]</scope>
    <source>
        <strain>cv. Nipponbare</strain>
    </source>
</reference>
<reference key="2">
    <citation type="journal article" date="2005" name="Nature">
        <title>The map-based sequence of the rice genome.</title>
        <authorList>
            <consortium name="International rice genome sequencing project (IRGSP)"/>
        </authorList>
    </citation>
    <scope>NUCLEOTIDE SEQUENCE [LARGE SCALE GENOMIC DNA]</scope>
    <source>
        <strain>cv. Nipponbare</strain>
    </source>
</reference>
<reference key="3">
    <citation type="journal article" date="2008" name="Nucleic Acids Res.">
        <title>The rice annotation project database (RAP-DB): 2008 update.</title>
        <authorList>
            <consortium name="The rice annotation project (RAP)"/>
        </authorList>
    </citation>
    <scope>GENOME REANNOTATION</scope>
    <source>
        <strain>cv. Nipponbare</strain>
    </source>
</reference>
<reference key="4">
    <citation type="journal article" date="2013" name="Rice">
        <title>Improvement of the Oryza sativa Nipponbare reference genome using next generation sequence and optical map data.</title>
        <authorList>
            <person name="Kawahara Y."/>
            <person name="de la Bastide M."/>
            <person name="Hamilton J.P."/>
            <person name="Kanamori H."/>
            <person name="McCombie W.R."/>
            <person name="Ouyang S."/>
            <person name="Schwartz D.C."/>
            <person name="Tanaka T."/>
            <person name="Wu J."/>
            <person name="Zhou S."/>
            <person name="Childs K.L."/>
            <person name="Davidson R.M."/>
            <person name="Lin H."/>
            <person name="Quesada-Ocampo L."/>
            <person name="Vaillancourt B."/>
            <person name="Sakai H."/>
            <person name="Lee S.S."/>
            <person name="Kim J."/>
            <person name="Numa H."/>
            <person name="Itoh T."/>
            <person name="Buell C.R."/>
            <person name="Matsumoto T."/>
        </authorList>
    </citation>
    <scope>GENOME REANNOTATION</scope>
    <source>
        <strain>cv. Nipponbare</strain>
    </source>
</reference>
<reference key="5">
    <citation type="journal article" date="2005" name="PLoS Biol.">
        <title>The genomes of Oryza sativa: a history of duplications.</title>
        <authorList>
            <person name="Yu J."/>
            <person name="Wang J."/>
            <person name="Lin W."/>
            <person name="Li S."/>
            <person name="Li H."/>
            <person name="Zhou J."/>
            <person name="Ni P."/>
            <person name="Dong W."/>
            <person name="Hu S."/>
            <person name="Zeng C."/>
            <person name="Zhang J."/>
            <person name="Zhang Y."/>
            <person name="Li R."/>
            <person name="Xu Z."/>
            <person name="Li S."/>
            <person name="Li X."/>
            <person name="Zheng H."/>
            <person name="Cong L."/>
            <person name="Lin L."/>
            <person name="Yin J."/>
            <person name="Geng J."/>
            <person name="Li G."/>
            <person name="Shi J."/>
            <person name="Liu J."/>
            <person name="Lv H."/>
            <person name="Li J."/>
            <person name="Wang J."/>
            <person name="Deng Y."/>
            <person name="Ran L."/>
            <person name="Shi X."/>
            <person name="Wang X."/>
            <person name="Wu Q."/>
            <person name="Li C."/>
            <person name="Ren X."/>
            <person name="Wang J."/>
            <person name="Wang X."/>
            <person name="Li D."/>
            <person name="Liu D."/>
            <person name="Zhang X."/>
            <person name="Ji Z."/>
            <person name="Zhao W."/>
            <person name="Sun Y."/>
            <person name="Zhang Z."/>
            <person name="Bao J."/>
            <person name="Han Y."/>
            <person name="Dong L."/>
            <person name="Ji J."/>
            <person name="Chen P."/>
            <person name="Wu S."/>
            <person name="Liu J."/>
            <person name="Xiao Y."/>
            <person name="Bu D."/>
            <person name="Tan J."/>
            <person name="Yang L."/>
            <person name="Ye C."/>
            <person name="Zhang J."/>
            <person name="Xu J."/>
            <person name="Zhou Y."/>
            <person name="Yu Y."/>
            <person name="Zhang B."/>
            <person name="Zhuang S."/>
            <person name="Wei H."/>
            <person name="Liu B."/>
            <person name="Lei M."/>
            <person name="Yu H."/>
            <person name="Li Y."/>
            <person name="Xu H."/>
            <person name="Wei S."/>
            <person name="He X."/>
            <person name="Fang L."/>
            <person name="Zhang Z."/>
            <person name="Zhang Y."/>
            <person name="Huang X."/>
            <person name="Su Z."/>
            <person name="Tong W."/>
            <person name="Li J."/>
            <person name="Tong Z."/>
            <person name="Li S."/>
            <person name="Ye J."/>
            <person name="Wang L."/>
            <person name="Fang L."/>
            <person name="Lei T."/>
            <person name="Chen C.-S."/>
            <person name="Chen H.-C."/>
            <person name="Xu Z."/>
            <person name="Li H."/>
            <person name="Huang H."/>
            <person name="Zhang F."/>
            <person name="Xu H."/>
            <person name="Li N."/>
            <person name="Zhao C."/>
            <person name="Li S."/>
            <person name="Dong L."/>
            <person name="Huang Y."/>
            <person name="Li L."/>
            <person name="Xi Y."/>
            <person name="Qi Q."/>
            <person name="Li W."/>
            <person name="Zhang B."/>
            <person name="Hu W."/>
            <person name="Zhang Y."/>
            <person name="Tian X."/>
            <person name="Jiao Y."/>
            <person name="Liang X."/>
            <person name="Jin J."/>
            <person name="Gao L."/>
            <person name="Zheng W."/>
            <person name="Hao B."/>
            <person name="Liu S.-M."/>
            <person name="Wang W."/>
            <person name="Yuan L."/>
            <person name="Cao M."/>
            <person name="McDermott J."/>
            <person name="Samudrala R."/>
            <person name="Wang J."/>
            <person name="Wong G.K.-S."/>
            <person name="Yang H."/>
        </authorList>
    </citation>
    <scope>NUCLEOTIDE SEQUENCE [LARGE SCALE GENOMIC DNA]</scope>
    <source>
        <strain>cv. Nipponbare</strain>
    </source>
</reference>
<reference key="6">
    <citation type="journal article" date="2003" name="Science">
        <title>Collection, mapping, and annotation of over 28,000 cDNA clones from japonica rice.</title>
        <authorList>
            <consortium name="The rice full-length cDNA consortium"/>
        </authorList>
    </citation>
    <scope>NUCLEOTIDE SEQUENCE [LARGE SCALE MRNA]</scope>
    <source>
        <strain>cv. Nipponbare</strain>
    </source>
</reference>
<reference key="7">
    <citation type="journal article" date="2011" name="J. Biol. Chem.">
        <title>Nuclear/nucleolar GTPase 2 proteins as a subfamily of YlqF/YawG GTPases function in pre-60S ribosomal subunit maturation of mono- and dicotyledonous plants.</title>
        <authorList>
            <person name="Im C.H."/>
            <person name="Hwang S.M."/>
            <person name="Son Y.S."/>
            <person name="Heo J.B."/>
            <person name="Bang W.Y."/>
            <person name="Suwastika I.N."/>
            <person name="Shiina T."/>
            <person name="Bahk J.D."/>
        </authorList>
    </citation>
    <scope>FUNCTION</scope>
    <scope>TISSUE SPECIFICITY</scope>
    <scope>BIOPHYSICOCHEMICAL PROPERTIES</scope>
    <scope>ACTIVITY REGULATION</scope>
    <scope>SUBCELLULAR LOCATION</scope>
    <scope>INTERACTION WITH RPL10A</scope>
</reference>
<gene>
    <name evidence="4" type="primary">NUG2</name>
    <name evidence="7" type="ordered locus">Os03g0352400</name>
    <name evidence="6" type="ordered locus">LOC_Os03g22890</name>
    <name evidence="8" type="ORF">OsJ_10852</name>
</gene>
<proteinExistence type="evidence at protein level"/>
<protein>
    <recommendedName>
        <fullName evidence="4">Nuclear/nucleolar GTPase 2</fullName>
        <shortName evidence="4">OsNug2</shortName>
    </recommendedName>
</protein>
<sequence length="535" mass="60181">MAKKKERAVNVSGKPRHSLDVNRANDKKGAGGGAGGGGGGRSAATVRRLKMYKMRPLRDRGGKILKHDLQSKELPNTRIEPDRRWFGNTRVVNQKELEFFREELQSRLSNNYNVILKERKLPLSLLQDHQKQARAHLLDTEPFEHAFGPKGKRKRPKLMALDYESLLKKADDSQGAFEDKHATAKLLKEEEEDGLRDLVRHTMFEKGQSKRIWGELYKVIDSSDVVVQVLDARDPMGTRCYHLEKHLKENAKHKHLVFLLNKCDLVPAWATKGWLRTLSKDYPTLAFHASINSSFGKGSLLSVLRQFARLKSDKQAISVGFVGYPNVGKSSVINTLRSKSVCKVAPIPGETKVWQYITLTKRIFLIDCPGVVYQNNDSETDIVLKGVVRVTNLADASEHIGEVLRRVKKEHLKRAYKIEDWVDDNDFLVQLSKTTGKLLRGGEPDLTTTAKMVLHDWQRGKIPFFVPPPQQGEDSPSETAEPVEKSDEEGVSSDRTAAAMKAIAGIISSQQQMNVPCQKEFGVTNEDSEVAEQSE</sequence>
<name>NUG2_ORYSJ</name>
<organism evidence="9">
    <name type="scientific">Oryza sativa subsp. japonica</name>
    <name type="common">Rice</name>
    <dbReference type="NCBI Taxonomy" id="39947"/>
    <lineage>
        <taxon>Eukaryota</taxon>
        <taxon>Viridiplantae</taxon>
        <taxon>Streptophyta</taxon>
        <taxon>Embryophyta</taxon>
        <taxon>Tracheophyta</taxon>
        <taxon>Spermatophyta</taxon>
        <taxon>Magnoliopsida</taxon>
        <taxon>Liliopsida</taxon>
        <taxon>Poales</taxon>
        <taxon>Poaceae</taxon>
        <taxon>BOP clade</taxon>
        <taxon>Oryzoideae</taxon>
        <taxon>Oryzeae</taxon>
        <taxon>Oryzinae</taxon>
        <taxon>Oryza</taxon>
        <taxon>Oryza sativa</taxon>
    </lineage>
</organism>
<accession>Q10LF7</accession>
<accession>A0A0P0VYB6</accession>
<accession>A3AHY4</accession>
<feature type="chain" id="PRO_0000432557" description="Nuclear/nucleolar GTPase 2">
    <location>
        <begin position="1"/>
        <end position="535"/>
    </location>
</feature>
<feature type="domain" description="CP-type G" evidence="1">
    <location>
        <begin position="213"/>
        <end position="374"/>
    </location>
</feature>
<feature type="region of interest" description="Disordered" evidence="2">
    <location>
        <begin position="1"/>
        <end position="42"/>
    </location>
</feature>
<feature type="region of interest" description="G4" evidence="1">
    <location>
        <begin position="261"/>
        <end position="264"/>
    </location>
</feature>
<feature type="region of interest" description="G5" evidence="1">
    <location>
        <begin position="290"/>
        <end position="292"/>
    </location>
</feature>
<feature type="region of interest" description="G1" evidence="1">
    <location>
        <begin position="323"/>
        <end position="330"/>
    </location>
</feature>
<feature type="region of interest" description="G2" evidence="1">
    <location>
        <begin position="349"/>
        <end position="353"/>
    </location>
</feature>
<feature type="region of interest" description="G3" evidence="1">
    <location>
        <begin position="367"/>
        <end position="370"/>
    </location>
</feature>
<feature type="region of interest" description="Disordered" evidence="2">
    <location>
        <begin position="464"/>
        <end position="494"/>
    </location>
</feature>
<feature type="compositionally biased region" description="Basic and acidic residues" evidence="2">
    <location>
        <begin position="17"/>
        <end position="29"/>
    </location>
</feature>
<feature type="compositionally biased region" description="Gly residues" evidence="2">
    <location>
        <begin position="30"/>
        <end position="41"/>
    </location>
</feature>
<feature type="sequence conflict" description="In Ref. 5; EAZ26923." evidence="5" ref="5">
    <original>NS</original>
    <variation>YR</variation>
    <location>
        <begin position="292"/>
        <end position="293"/>
    </location>
</feature>
<comment type="function">
    <text evidence="3">GTPase involved in pre-60S ribosomal subunit maturation.</text>
</comment>
<comment type="activity regulation">
    <text evidence="3">The GTPase activity is stimulated in the presence of ribosomes, particularly of the 60S subunit.</text>
</comment>
<comment type="biophysicochemical properties">
    <kinetics>
        <text evidence="3">kcat is 0.12 min(-1) for GTP.</text>
    </kinetics>
</comment>
<comment type="subunit">
    <text evidence="3">Interacts (via N-terminus) with the 60S ribosomal proteins RPL10A. This interaction is enhanced by the addition of GTP.</text>
</comment>
<comment type="subcellular location">
    <subcellularLocation>
        <location evidence="3">Nucleus</location>
        <location evidence="3">Nucleolus</location>
    </subcellularLocation>
    <subcellularLocation>
        <location evidence="3">Nucleus</location>
    </subcellularLocation>
    <text evidence="3">The N-terminal region (1-231) is necessary for targeting to the nucleus.</text>
</comment>
<comment type="tissue specificity">
    <text evidence="3">Expressed in roots, shoot apical meristem, leaves, leaf sheaths and flowers.</text>
</comment>
<comment type="similarity">
    <text evidence="1">Belongs to the TRAFAC class YlqF/YawG GTPase family. RsgA subfamily.</text>
</comment>
<evidence type="ECO:0000255" key="1">
    <source>
        <dbReference type="PROSITE-ProRule" id="PRU01058"/>
    </source>
</evidence>
<evidence type="ECO:0000256" key="2">
    <source>
        <dbReference type="SAM" id="MobiDB-lite"/>
    </source>
</evidence>
<evidence type="ECO:0000269" key="3">
    <source>
    </source>
</evidence>
<evidence type="ECO:0000303" key="4">
    <source>
    </source>
</evidence>
<evidence type="ECO:0000305" key="5"/>
<evidence type="ECO:0000312" key="6">
    <source>
        <dbReference type="EMBL" id="ABF95948.1"/>
    </source>
</evidence>
<evidence type="ECO:0000312" key="7">
    <source>
        <dbReference type="EMBL" id="BAF12037.1"/>
    </source>
</evidence>
<evidence type="ECO:0000312" key="8">
    <source>
        <dbReference type="EMBL" id="EAZ26923.1"/>
    </source>
</evidence>
<evidence type="ECO:0000312" key="9">
    <source>
        <dbReference type="Proteomes" id="UP000059680"/>
    </source>
</evidence>